<evidence type="ECO:0000255" key="1">
    <source>
        <dbReference type="HAMAP-Rule" id="MF_00605"/>
    </source>
</evidence>
<name>TRMD_ENTFA</name>
<reference key="1">
    <citation type="journal article" date="2003" name="Science">
        <title>Role of mobile DNA in the evolution of vancomycin-resistant Enterococcus faecalis.</title>
        <authorList>
            <person name="Paulsen I.T."/>
            <person name="Banerjei L."/>
            <person name="Myers G.S.A."/>
            <person name="Nelson K.E."/>
            <person name="Seshadri R."/>
            <person name="Read T.D."/>
            <person name="Fouts D.E."/>
            <person name="Eisen J.A."/>
            <person name="Gill S.R."/>
            <person name="Heidelberg J.F."/>
            <person name="Tettelin H."/>
            <person name="Dodson R.J."/>
            <person name="Umayam L.A."/>
            <person name="Brinkac L.M."/>
            <person name="Beanan M.J."/>
            <person name="Daugherty S.C."/>
            <person name="DeBoy R.T."/>
            <person name="Durkin S.A."/>
            <person name="Kolonay J.F."/>
            <person name="Madupu R."/>
            <person name="Nelson W.C."/>
            <person name="Vamathevan J.J."/>
            <person name="Tran B."/>
            <person name="Upton J."/>
            <person name="Hansen T."/>
            <person name="Shetty J."/>
            <person name="Khouri H.M."/>
            <person name="Utterback T.R."/>
            <person name="Radune D."/>
            <person name="Ketchum K.A."/>
            <person name="Dougherty B.A."/>
            <person name="Fraser C.M."/>
        </authorList>
    </citation>
    <scope>NUCLEOTIDE SEQUENCE [LARGE SCALE GENOMIC DNA]</scope>
    <source>
        <strain>ATCC 700802 / V583</strain>
    </source>
</reference>
<proteinExistence type="inferred from homology"/>
<feature type="chain" id="PRO_0000060373" description="tRNA (guanine-N(1)-)-methyltransferase">
    <location>
        <begin position="1"/>
        <end position="246"/>
    </location>
</feature>
<feature type="binding site" evidence="1">
    <location>
        <position position="114"/>
    </location>
    <ligand>
        <name>S-adenosyl-L-methionine</name>
        <dbReference type="ChEBI" id="CHEBI:59789"/>
    </ligand>
</feature>
<feature type="binding site" evidence="1">
    <location>
        <begin position="133"/>
        <end position="138"/>
    </location>
    <ligand>
        <name>S-adenosyl-L-methionine</name>
        <dbReference type="ChEBI" id="CHEBI:59789"/>
    </ligand>
</feature>
<comment type="function">
    <text evidence="1">Specifically methylates guanosine-37 in various tRNAs.</text>
</comment>
<comment type="catalytic activity">
    <reaction evidence="1">
        <text>guanosine(37) in tRNA + S-adenosyl-L-methionine = N(1)-methylguanosine(37) in tRNA + S-adenosyl-L-homocysteine + H(+)</text>
        <dbReference type="Rhea" id="RHEA:36899"/>
        <dbReference type="Rhea" id="RHEA-COMP:10145"/>
        <dbReference type="Rhea" id="RHEA-COMP:10147"/>
        <dbReference type="ChEBI" id="CHEBI:15378"/>
        <dbReference type="ChEBI" id="CHEBI:57856"/>
        <dbReference type="ChEBI" id="CHEBI:59789"/>
        <dbReference type="ChEBI" id="CHEBI:73542"/>
        <dbReference type="ChEBI" id="CHEBI:74269"/>
        <dbReference type="EC" id="2.1.1.228"/>
    </reaction>
</comment>
<comment type="subunit">
    <text evidence="1">Homodimer.</text>
</comment>
<comment type="subcellular location">
    <subcellularLocation>
        <location evidence="1">Cytoplasm</location>
    </subcellularLocation>
</comment>
<comment type="similarity">
    <text evidence="1">Belongs to the RNA methyltransferase TrmD family.</text>
</comment>
<protein>
    <recommendedName>
        <fullName evidence="1">tRNA (guanine-N(1)-)-methyltransferase</fullName>
        <ecNumber evidence="1">2.1.1.228</ecNumber>
    </recommendedName>
    <alternativeName>
        <fullName evidence="1">M1G-methyltransferase</fullName>
    </alternativeName>
    <alternativeName>
        <fullName evidence="1">tRNA [GM37] methyltransferase</fullName>
    </alternativeName>
</protein>
<sequence>MRIDVLTLFPRMFEGPMGESIIGKAREKQLLELNVSNFRDFSDNKHQTVDDYPYGGGAGMLLKVQPIYDNLKAIEEETNQQPKRVILLDPAGKPFNQKMAEEFSQEEHLVFICGHYEGYDERIRTMVTDEVSLGDYVLTGGELGAMVMIDATVRLLPDVLGNNLSAQTDSHSTGLLEHPQYTRPAIFNDMEVPAVLTNGNHKLIAEWQLKESLRRTFLRRPDMLESVEMTPEMLKLLEEIKQEEQK</sequence>
<gene>
    <name evidence="1" type="primary">trmD</name>
    <name type="ordered locus">EF_1899</name>
</gene>
<keyword id="KW-0963">Cytoplasm</keyword>
<keyword id="KW-0489">Methyltransferase</keyword>
<keyword id="KW-1185">Reference proteome</keyword>
<keyword id="KW-0949">S-adenosyl-L-methionine</keyword>
<keyword id="KW-0808">Transferase</keyword>
<keyword id="KW-0819">tRNA processing</keyword>
<organism>
    <name type="scientific">Enterococcus faecalis (strain ATCC 700802 / V583)</name>
    <dbReference type="NCBI Taxonomy" id="226185"/>
    <lineage>
        <taxon>Bacteria</taxon>
        <taxon>Bacillati</taxon>
        <taxon>Bacillota</taxon>
        <taxon>Bacilli</taxon>
        <taxon>Lactobacillales</taxon>
        <taxon>Enterococcaceae</taxon>
        <taxon>Enterococcus</taxon>
    </lineage>
</organism>
<dbReference type="EC" id="2.1.1.228" evidence="1"/>
<dbReference type="EMBL" id="AE016830">
    <property type="protein sequence ID" value="AAO81651.1"/>
    <property type="molecule type" value="Genomic_DNA"/>
</dbReference>
<dbReference type="RefSeq" id="NP_815581.1">
    <property type="nucleotide sequence ID" value="NC_004668.1"/>
</dbReference>
<dbReference type="RefSeq" id="WP_002381776.1">
    <property type="nucleotide sequence ID" value="NZ_KE136528.1"/>
</dbReference>
<dbReference type="SMR" id="Q820U3"/>
<dbReference type="STRING" id="226185.EF_1899"/>
<dbReference type="EnsemblBacteria" id="AAO81651">
    <property type="protein sequence ID" value="AAO81651"/>
    <property type="gene ID" value="EF_1899"/>
</dbReference>
<dbReference type="GeneID" id="60894144"/>
<dbReference type="KEGG" id="efa:EF1899"/>
<dbReference type="PATRIC" id="fig|226185.45.peg.1617"/>
<dbReference type="eggNOG" id="COG0336">
    <property type="taxonomic scope" value="Bacteria"/>
</dbReference>
<dbReference type="HOGENOM" id="CLU_047363_0_1_9"/>
<dbReference type="Proteomes" id="UP000001415">
    <property type="component" value="Chromosome"/>
</dbReference>
<dbReference type="GO" id="GO:0005829">
    <property type="term" value="C:cytosol"/>
    <property type="evidence" value="ECO:0007669"/>
    <property type="project" value="TreeGrafter"/>
</dbReference>
<dbReference type="GO" id="GO:0052906">
    <property type="term" value="F:tRNA (guanine(37)-N1)-methyltransferase activity"/>
    <property type="evidence" value="ECO:0007669"/>
    <property type="project" value="UniProtKB-UniRule"/>
</dbReference>
<dbReference type="GO" id="GO:0002939">
    <property type="term" value="P:tRNA N1-guanine methylation"/>
    <property type="evidence" value="ECO:0007669"/>
    <property type="project" value="TreeGrafter"/>
</dbReference>
<dbReference type="CDD" id="cd18080">
    <property type="entry name" value="TrmD-like"/>
    <property type="match status" value="1"/>
</dbReference>
<dbReference type="FunFam" id="1.10.1270.20:FF:000001">
    <property type="entry name" value="tRNA (guanine-N(1)-)-methyltransferase"/>
    <property type="match status" value="1"/>
</dbReference>
<dbReference type="FunFam" id="3.40.1280.10:FF:000001">
    <property type="entry name" value="tRNA (guanine-N(1)-)-methyltransferase"/>
    <property type="match status" value="1"/>
</dbReference>
<dbReference type="Gene3D" id="3.40.1280.10">
    <property type="match status" value="1"/>
</dbReference>
<dbReference type="Gene3D" id="1.10.1270.20">
    <property type="entry name" value="tRNA(m1g37)methyltransferase, domain 2"/>
    <property type="match status" value="1"/>
</dbReference>
<dbReference type="HAMAP" id="MF_00605">
    <property type="entry name" value="TrmD"/>
    <property type="match status" value="1"/>
</dbReference>
<dbReference type="InterPro" id="IPR029028">
    <property type="entry name" value="Alpha/beta_knot_MTases"/>
</dbReference>
<dbReference type="InterPro" id="IPR023148">
    <property type="entry name" value="tRNA_m1G_MeTrfase_C_sf"/>
</dbReference>
<dbReference type="InterPro" id="IPR002649">
    <property type="entry name" value="tRNA_m1G_MeTrfase_TrmD"/>
</dbReference>
<dbReference type="InterPro" id="IPR029026">
    <property type="entry name" value="tRNA_m1G_MTases_N"/>
</dbReference>
<dbReference type="InterPro" id="IPR016009">
    <property type="entry name" value="tRNA_MeTrfase_TRMD/TRM10"/>
</dbReference>
<dbReference type="NCBIfam" id="NF000648">
    <property type="entry name" value="PRK00026.1"/>
    <property type="match status" value="1"/>
</dbReference>
<dbReference type="NCBIfam" id="TIGR00088">
    <property type="entry name" value="trmD"/>
    <property type="match status" value="1"/>
</dbReference>
<dbReference type="PANTHER" id="PTHR46417">
    <property type="entry name" value="TRNA (GUANINE-N(1)-)-METHYLTRANSFERASE"/>
    <property type="match status" value="1"/>
</dbReference>
<dbReference type="PANTHER" id="PTHR46417:SF1">
    <property type="entry name" value="TRNA (GUANINE-N(1)-)-METHYLTRANSFERASE"/>
    <property type="match status" value="1"/>
</dbReference>
<dbReference type="Pfam" id="PF01746">
    <property type="entry name" value="tRNA_m1G_MT"/>
    <property type="match status" value="1"/>
</dbReference>
<dbReference type="PIRSF" id="PIRSF000386">
    <property type="entry name" value="tRNA_mtase"/>
    <property type="match status" value="1"/>
</dbReference>
<dbReference type="SUPFAM" id="SSF75217">
    <property type="entry name" value="alpha/beta knot"/>
    <property type="match status" value="1"/>
</dbReference>
<accession>Q820U3</accession>